<comment type="catalytic activity">
    <reaction evidence="1">
        <text>urea + 2 H2O + H(+) = hydrogencarbonate + 2 NH4(+)</text>
        <dbReference type="Rhea" id="RHEA:20557"/>
        <dbReference type="ChEBI" id="CHEBI:15377"/>
        <dbReference type="ChEBI" id="CHEBI:15378"/>
        <dbReference type="ChEBI" id="CHEBI:16199"/>
        <dbReference type="ChEBI" id="CHEBI:17544"/>
        <dbReference type="ChEBI" id="CHEBI:28938"/>
        <dbReference type="EC" id="3.5.1.5"/>
    </reaction>
</comment>
<comment type="pathway">
    <text evidence="1">Nitrogen metabolism; urea degradation; CO(2) and NH(3) from urea (urease route): step 1/1.</text>
</comment>
<comment type="subunit">
    <text evidence="1">Heterotrimer of UreA (gamma), UreB (beta) and UreC (alpha) subunits. Three heterotrimers associate to form the active enzyme.</text>
</comment>
<comment type="subcellular location">
    <subcellularLocation>
        <location evidence="1">Cytoplasm</location>
    </subcellularLocation>
</comment>
<comment type="similarity">
    <text evidence="1">Belongs to the urease beta subunit family.</text>
</comment>
<organism>
    <name type="scientific">Burkholderia pseudomallei (strain K96243)</name>
    <dbReference type="NCBI Taxonomy" id="272560"/>
    <lineage>
        <taxon>Bacteria</taxon>
        <taxon>Pseudomonadati</taxon>
        <taxon>Pseudomonadota</taxon>
        <taxon>Betaproteobacteria</taxon>
        <taxon>Burkholderiales</taxon>
        <taxon>Burkholderiaceae</taxon>
        <taxon>Burkholderia</taxon>
        <taxon>pseudomallei group</taxon>
    </lineage>
</organism>
<evidence type="ECO:0000255" key="1">
    <source>
        <dbReference type="HAMAP-Rule" id="MF_01954"/>
    </source>
</evidence>
<proteinExistence type="inferred from homology"/>
<keyword id="KW-0963">Cytoplasm</keyword>
<keyword id="KW-0378">Hydrolase</keyword>
<keyword id="KW-1185">Reference proteome</keyword>
<gene>
    <name evidence="1" type="primary">ureB</name>
    <name type="ordered locus">BPSL2658</name>
</gene>
<feature type="chain" id="PRO_0000234241" description="Urease subunit beta">
    <location>
        <begin position="1"/>
        <end position="101"/>
    </location>
</feature>
<dbReference type="EC" id="3.5.1.5" evidence="1"/>
<dbReference type="EMBL" id="BX571965">
    <property type="protein sequence ID" value="CAH36666.1"/>
    <property type="molecule type" value="Genomic_DNA"/>
</dbReference>
<dbReference type="RefSeq" id="WP_004186466.1">
    <property type="nucleotide sequence ID" value="NZ_CP009538.1"/>
</dbReference>
<dbReference type="RefSeq" id="YP_109254.1">
    <property type="nucleotide sequence ID" value="NC_006350.1"/>
</dbReference>
<dbReference type="SMR" id="Q63RL4"/>
<dbReference type="STRING" id="272560.BPSL2658"/>
<dbReference type="KEGG" id="bps:BPSL2658"/>
<dbReference type="PATRIC" id="fig|272560.51.peg.2686"/>
<dbReference type="eggNOG" id="COG0832">
    <property type="taxonomic scope" value="Bacteria"/>
</dbReference>
<dbReference type="UniPathway" id="UPA00258">
    <property type="reaction ID" value="UER00370"/>
</dbReference>
<dbReference type="Proteomes" id="UP000000605">
    <property type="component" value="Chromosome 1"/>
</dbReference>
<dbReference type="GO" id="GO:0035550">
    <property type="term" value="C:urease complex"/>
    <property type="evidence" value="ECO:0007669"/>
    <property type="project" value="InterPro"/>
</dbReference>
<dbReference type="GO" id="GO:0009039">
    <property type="term" value="F:urease activity"/>
    <property type="evidence" value="ECO:0007669"/>
    <property type="project" value="UniProtKB-UniRule"/>
</dbReference>
<dbReference type="GO" id="GO:0043419">
    <property type="term" value="P:urea catabolic process"/>
    <property type="evidence" value="ECO:0007669"/>
    <property type="project" value="UniProtKB-UniRule"/>
</dbReference>
<dbReference type="CDD" id="cd00407">
    <property type="entry name" value="Urease_beta"/>
    <property type="match status" value="1"/>
</dbReference>
<dbReference type="FunFam" id="2.10.150.10:FF:000001">
    <property type="entry name" value="Urease subunit beta"/>
    <property type="match status" value="1"/>
</dbReference>
<dbReference type="Gene3D" id="2.10.150.10">
    <property type="entry name" value="Urease, beta subunit"/>
    <property type="match status" value="1"/>
</dbReference>
<dbReference type="HAMAP" id="MF_01954">
    <property type="entry name" value="Urease_beta"/>
    <property type="match status" value="1"/>
</dbReference>
<dbReference type="InterPro" id="IPR002019">
    <property type="entry name" value="Urease_beta-like"/>
</dbReference>
<dbReference type="InterPro" id="IPR036461">
    <property type="entry name" value="Urease_betasu_sf"/>
</dbReference>
<dbReference type="InterPro" id="IPR050069">
    <property type="entry name" value="Urease_subunit"/>
</dbReference>
<dbReference type="NCBIfam" id="NF009682">
    <property type="entry name" value="PRK13203.1"/>
    <property type="match status" value="1"/>
</dbReference>
<dbReference type="NCBIfam" id="TIGR00192">
    <property type="entry name" value="urease_beta"/>
    <property type="match status" value="1"/>
</dbReference>
<dbReference type="PANTHER" id="PTHR33569">
    <property type="entry name" value="UREASE"/>
    <property type="match status" value="1"/>
</dbReference>
<dbReference type="PANTHER" id="PTHR33569:SF1">
    <property type="entry name" value="UREASE"/>
    <property type="match status" value="1"/>
</dbReference>
<dbReference type="Pfam" id="PF00699">
    <property type="entry name" value="Urease_beta"/>
    <property type="match status" value="1"/>
</dbReference>
<dbReference type="SUPFAM" id="SSF51278">
    <property type="entry name" value="Urease, beta-subunit"/>
    <property type="match status" value="1"/>
</dbReference>
<name>URE2_BURPS</name>
<protein>
    <recommendedName>
        <fullName evidence="1">Urease subunit beta</fullName>
        <ecNumber evidence="1">3.5.1.5</ecNumber>
    </recommendedName>
    <alternativeName>
        <fullName evidence="1">Urea amidohydrolase subunit beta</fullName>
    </alternativeName>
</protein>
<sequence>MIPGELVIDDGEHTLNAGRHTIALVVANTGDRPVQVGSHYHFHEVNDALSFDRAAARGFRLNIAAGTAVRFEPGQTRTVELVELGGARAVYGFQGKVMGPL</sequence>
<accession>Q63RL4</accession>
<reference key="1">
    <citation type="journal article" date="2004" name="Proc. Natl. Acad. Sci. U.S.A.">
        <title>Genomic plasticity of the causative agent of melioidosis, Burkholderia pseudomallei.</title>
        <authorList>
            <person name="Holden M.T.G."/>
            <person name="Titball R.W."/>
            <person name="Peacock S.J."/>
            <person name="Cerdeno-Tarraga A.-M."/>
            <person name="Atkins T."/>
            <person name="Crossman L.C."/>
            <person name="Pitt T."/>
            <person name="Churcher C."/>
            <person name="Mungall K.L."/>
            <person name="Bentley S.D."/>
            <person name="Sebaihia M."/>
            <person name="Thomson N.R."/>
            <person name="Bason N."/>
            <person name="Beacham I.R."/>
            <person name="Brooks K."/>
            <person name="Brown K.A."/>
            <person name="Brown N.F."/>
            <person name="Challis G.L."/>
            <person name="Cherevach I."/>
            <person name="Chillingworth T."/>
            <person name="Cronin A."/>
            <person name="Crossett B."/>
            <person name="Davis P."/>
            <person name="DeShazer D."/>
            <person name="Feltwell T."/>
            <person name="Fraser A."/>
            <person name="Hance Z."/>
            <person name="Hauser H."/>
            <person name="Holroyd S."/>
            <person name="Jagels K."/>
            <person name="Keith K.E."/>
            <person name="Maddison M."/>
            <person name="Moule S."/>
            <person name="Price C."/>
            <person name="Quail M.A."/>
            <person name="Rabbinowitsch E."/>
            <person name="Rutherford K."/>
            <person name="Sanders M."/>
            <person name="Simmonds M."/>
            <person name="Songsivilai S."/>
            <person name="Stevens K."/>
            <person name="Tumapa S."/>
            <person name="Vesaratchavest M."/>
            <person name="Whitehead S."/>
            <person name="Yeats C."/>
            <person name="Barrell B.G."/>
            <person name="Oyston P.C.F."/>
            <person name="Parkhill J."/>
        </authorList>
    </citation>
    <scope>NUCLEOTIDE SEQUENCE [LARGE SCALE GENOMIC DNA]</scope>
    <source>
        <strain>K96243</strain>
    </source>
</reference>